<geneLocation type="chloroplast"/>
<protein>
    <recommendedName>
        <fullName>Cytochrome c6</fullName>
    </recommendedName>
    <alternativeName>
        <fullName>Cytochrome c-553</fullName>
    </alternativeName>
    <alternativeName>
        <fullName>Cytochrome c553</fullName>
    </alternativeName>
    <alternativeName>
        <fullName>Soluble cytochrome f</fullName>
    </alternativeName>
</protein>
<dbReference type="EMBL" id="AF022186">
    <property type="protein sequence ID" value="AAF12937.1"/>
    <property type="status" value="ALT_INIT"/>
    <property type="molecule type" value="Genomic_DNA"/>
</dbReference>
<dbReference type="RefSeq" id="NP_045157.1">
    <property type="nucleotide sequence ID" value="NC_001840.1"/>
</dbReference>
<dbReference type="SMR" id="Q9TLW1"/>
<dbReference type="GeneID" id="800209"/>
<dbReference type="GO" id="GO:0009543">
    <property type="term" value="C:chloroplast thylakoid lumen"/>
    <property type="evidence" value="ECO:0007669"/>
    <property type="project" value="UniProtKB-SubCell"/>
</dbReference>
<dbReference type="GO" id="GO:0009055">
    <property type="term" value="F:electron transfer activity"/>
    <property type="evidence" value="ECO:0007669"/>
    <property type="project" value="UniProtKB-UniRule"/>
</dbReference>
<dbReference type="GO" id="GO:0020037">
    <property type="term" value="F:heme binding"/>
    <property type="evidence" value="ECO:0007669"/>
    <property type="project" value="InterPro"/>
</dbReference>
<dbReference type="GO" id="GO:0005506">
    <property type="term" value="F:iron ion binding"/>
    <property type="evidence" value="ECO:0007669"/>
    <property type="project" value="InterPro"/>
</dbReference>
<dbReference type="GO" id="GO:0015979">
    <property type="term" value="P:photosynthesis"/>
    <property type="evidence" value="ECO:0007669"/>
    <property type="project" value="UniProtKB-UniRule"/>
</dbReference>
<dbReference type="FunFam" id="1.10.760.10:FF:000038">
    <property type="entry name" value="Cytochrome c6"/>
    <property type="match status" value="1"/>
</dbReference>
<dbReference type="Gene3D" id="1.10.760.10">
    <property type="entry name" value="Cytochrome c-like domain"/>
    <property type="match status" value="1"/>
</dbReference>
<dbReference type="HAMAP" id="MF_00594">
    <property type="entry name" value="Cytc_PetJ"/>
    <property type="match status" value="1"/>
</dbReference>
<dbReference type="InterPro" id="IPR009056">
    <property type="entry name" value="Cyt_c-like_dom"/>
</dbReference>
<dbReference type="InterPro" id="IPR036909">
    <property type="entry name" value="Cyt_c-like_dom_sf"/>
</dbReference>
<dbReference type="InterPro" id="IPR023655">
    <property type="entry name" value="Cyt_C6"/>
</dbReference>
<dbReference type="InterPro" id="IPR008168">
    <property type="entry name" value="Cyt_C_IC"/>
</dbReference>
<dbReference type="PANTHER" id="PTHR34688">
    <property type="entry name" value="CYTOCHROME C6, CHLOROPLASTIC"/>
    <property type="match status" value="1"/>
</dbReference>
<dbReference type="PANTHER" id="PTHR34688:SF2">
    <property type="entry name" value="CYTOCHROME C6, CHLOROPLASTIC"/>
    <property type="match status" value="1"/>
</dbReference>
<dbReference type="Pfam" id="PF13442">
    <property type="entry name" value="Cytochrome_CBB3"/>
    <property type="match status" value="1"/>
</dbReference>
<dbReference type="PRINTS" id="PR00605">
    <property type="entry name" value="CYTCHROMECIC"/>
</dbReference>
<dbReference type="SUPFAM" id="SSF46626">
    <property type="entry name" value="Cytochrome c"/>
    <property type="match status" value="1"/>
</dbReference>
<dbReference type="PROSITE" id="PS51007">
    <property type="entry name" value="CYTC"/>
    <property type="match status" value="1"/>
</dbReference>
<keyword id="KW-0150">Chloroplast</keyword>
<keyword id="KW-0249">Electron transport</keyword>
<keyword id="KW-0349">Heme</keyword>
<keyword id="KW-0408">Iron</keyword>
<keyword id="KW-0479">Metal-binding</keyword>
<keyword id="KW-0602">Photosynthesis</keyword>
<keyword id="KW-0934">Plastid</keyword>
<keyword id="KW-0732">Signal</keyword>
<keyword id="KW-0793">Thylakoid</keyword>
<keyword id="KW-0813">Transport</keyword>
<reference key="1">
    <citation type="journal article" date="2000" name="J. Mol. Evol.">
        <title>The structure and gene repertoire of an ancient red algal plastid genome.</title>
        <authorList>
            <person name="Gloeckner G."/>
            <person name="Rosenthal A."/>
            <person name="Valentin K.-U."/>
        </authorList>
    </citation>
    <scope>NUCLEOTIDE SEQUENCE [LARGE SCALE GENOMIC DNA]</scope>
    <source>
        <strain>RK-1</strain>
    </source>
</reference>
<accession>Q9TLW1</accession>
<sequence length="109" mass="11767">MFKNIIIVVAVTLCALFTNEHVVYSANLEHGEQIFSANCAACHAGGNNVIMPEKTLKAEALEANNIKNISAIANQVKNGKNAMPSFSRLSDSDIEDVANYVLSKADKGW</sequence>
<organism>
    <name type="scientific">Cyanidium caldarium</name>
    <name type="common">Red alga</name>
    <dbReference type="NCBI Taxonomy" id="2771"/>
    <lineage>
        <taxon>Eukaryota</taxon>
        <taxon>Rhodophyta</taxon>
        <taxon>Bangiophyceae</taxon>
        <taxon>Cyanidiales</taxon>
        <taxon>Cyanidiaceae</taxon>
        <taxon>Cyanidium</taxon>
    </lineage>
</organism>
<feature type="signal peptide" evidence="1">
    <location>
        <begin position="1"/>
        <end position="25"/>
    </location>
</feature>
<feature type="chain" id="PRO_0000023851" description="Cytochrome c6">
    <location>
        <begin position="26"/>
        <end position="109"/>
    </location>
</feature>
<feature type="binding site" description="covalent" evidence="1">
    <location>
        <position position="39"/>
    </location>
    <ligand>
        <name>heme c</name>
        <dbReference type="ChEBI" id="CHEBI:61717"/>
    </ligand>
</feature>
<feature type="binding site" description="covalent" evidence="1">
    <location>
        <position position="42"/>
    </location>
    <ligand>
        <name>heme c</name>
        <dbReference type="ChEBI" id="CHEBI:61717"/>
    </ligand>
</feature>
<feature type="binding site" description="axial binding residue" evidence="1">
    <location>
        <position position="43"/>
    </location>
    <ligand>
        <name>heme c</name>
        <dbReference type="ChEBI" id="CHEBI:61717"/>
    </ligand>
    <ligandPart>
        <name>Fe</name>
        <dbReference type="ChEBI" id="CHEBI:18248"/>
    </ligandPart>
</feature>
<feature type="binding site" description="axial binding residue" evidence="1">
    <location>
        <position position="83"/>
    </location>
    <ligand>
        <name>heme c</name>
        <dbReference type="ChEBI" id="CHEBI:61717"/>
    </ligand>
    <ligandPart>
        <name>Fe</name>
        <dbReference type="ChEBI" id="CHEBI:18248"/>
    </ligandPart>
</feature>
<evidence type="ECO:0000250" key="1"/>
<evidence type="ECO:0000305" key="2"/>
<gene>
    <name type="primary">petJ</name>
</gene>
<comment type="function">
    <text evidence="1">Functions as an electron carrier between membrane-bound cytochrome b6-f and photosystem I in oxygenic photosynthesis.</text>
</comment>
<comment type="subunit">
    <text evidence="1">Monomer.</text>
</comment>
<comment type="subcellular location">
    <subcellularLocation>
        <location evidence="1">Plastid</location>
        <location evidence="1">Chloroplast thylakoid lumen</location>
    </subcellularLocation>
</comment>
<comment type="PTM">
    <text evidence="1">Binds 1 heme c group covalently per subunit.</text>
</comment>
<comment type="similarity">
    <text evidence="2">Belongs to the cytochrome c family. PetJ subfamily.</text>
</comment>
<comment type="sequence caution" evidence="2">
    <conflict type="erroneous initiation">
        <sequence resource="EMBL-CDS" id="AAF12937"/>
    </conflict>
</comment>
<proteinExistence type="inferred from homology"/>
<name>CYC6_CYACA</name>